<feature type="transit peptide" description="Mitochondrion" evidence="1">
    <location>
        <begin position="1"/>
        <end position="12"/>
    </location>
</feature>
<feature type="chain" id="PRO_0000006116" description="Cytochrome c oxidase subunit 6A2, mitochondrial">
    <location>
        <begin position="13"/>
        <end position="97"/>
    </location>
</feature>
<feature type="topological domain" description="Mitochondrial matrix" evidence="2">
    <location>
        <begin position="13"/>
        <end position="24"/>
    </location>
</feature>
<feature type="transmembrane region" description="Helical" evidence="2">
    <location>
        <begin position="25"/>
        <end position="49"/>
    </location>
</feature>
<feature type="topological domain" description="Mitochondrial intermembrane" evidence="2">
    <location>
        <begin position="50"/>
        <end position="97"/>
    </location>
</feature>
<feature type="sequence variant" id="VAR_084183" description="In MC4DN18; reduced complex IV assembly; decreased COX6A2 protein stability; dbSNP:rs1597176845." evidence="5">
    <original>S</original>
    <variation>R</variation>
    <location>
        <position position="39"/>
    </location>
</feature>
<feature type="sequence variant" id="VAR_084184" description="In MC4DN18; reduced complex IV assembly; decreased COX6A2 protein stability; dbSNP:rs1275864234." evidence="5">
    <original>C</original>
    <variation>R</variation>
    <location>
        <position position="43"/>
    </location>
</feature>
<feature type="sequence conflict" description="In Ref. 1; AAA52062." evidence="6" ref="1">
    <original>P</original>
    <variation>E</variation>
    <location>
        <position position="55"/>
    </location>
</feature>
<sequence>MALPLRPLTRGLASAAKGGHGGAGARTWRLLTFVLALPSVALCTFNSYLHSGHRPRPEFRPYQHLRIRTKPYPWGDGNHTLFHNSHVNPLPTGYEHP</sequence>
<protein>
    <recommendedName>
        <fullName>Cytochrome c oxidase subunit 6A2, mitochondrial</fullName>
    </recommendedName>
    <alternativeName>
        <fullName>Cytochrome c oxidase polypeptide VIa-heart</fullName>
        <shortName>COXVIAH</shortName>
    </alternativeName>
    <alternativeName>
        <fullName>Cytochrome c oxidase subunit VIA-muscle</fullName>
        <shortName>COX VIa-M</shortName>
    </alternativeName>
</protein>
<reference key="1">
    <citation type="journal article" date="1992" name="Gene">
        <title>Differential expression of genes specifying two isoforms of subunit VIa of human cytochrome c oxidase.</title>
        <authorList>
            <person name="Fabrizi G.M."/>
            <person name="Sadlock J."/>
            <person name="Hirano M."/>
            <person name="Mita S."/>
            <person name="Koga Y."/>
            <person name="Rizzuto R."/>
            <person name="Zeviani M."/>
            <person name="Schon E.A."/>
        </authorList>
    </citation>
    <scope>NUCLEOTIDE SEQUENCE [MRNA]</scope>
    <scope>TISSUE SPECIFICITY</scope>
</reference>
<reference key="2">
    <citation type="journal article" date="1997" name="Genomics">
        <title>Structure of the human gene (COX6A2) for the heart/muscle isoform of cytochrome c oxidase subunit VIa and its chromosomal location in humans, mice, and cattle.</title>
        <authorList>
            <person name="Bachman N.J."/>
            <person name="Riggs P.K."/>
            <person name="Siddiqui N.Y."/>
            <person name="Makris G.J."/>
            <person name="Womack J.E."/>
            <person name="Lomax M.I."/>
        </authorList>
    </citation>
    <scope>NUCLEOTIDE SEQUENCE [GENOMIC DNA]</scope>
</reference>
<reference key="3">
    <citation type="journal article" date="2004" name="Genome Res.">
        <title>The status, quality, and expansion of the NIH full-length cDNA project: the Mammalian Gene Collection (MGC).</title>
        <authorList>
            <consortium name="The MGC Project Team"/>
        </authorList>
    </citation>
    <scope>NUCLEOTIDE SEQUENCE [LARGE SCALE MRNA]</scope>
    <source>
        <tissue>Brain</tissue>
    </source>
</reference>
<reference key="4">
    <citation type="journal article" date="2019" name="Ann. Neurol.">
        <title>COX6A2 variants cause a muscle-specific cytochrome c oxidase deficiency.</title>
        <authorList>
            <person name="Inoue M."/>
            <person name="Uchino S."/>
            <person name="Iida A."/>
            <person name="Noguchi S."/>
            <person name="Hayashi S."/>
            <person name="Takahashi T."/>
            <person name="Fujii K."/>
            <person name="Komaki H."/>
            <person name="Takeshita E."/>
            <person name="Nonaka I."/>
            <person name="Okada Y."/>
            <person name="Yoshizawa T."/>
            <person name="Van Lommel L."/>
            <person name="Schuit F."/>
            <person name="Goto Y.I."/>
            <person name="Mimaki M."/>
            <person name="Nishino I."/>
        </authorList>
    </citation>
    <scope>TISSUE SPECIFICITY</scope>
    <scope>FUNCTION</scope>
    <scope>INVOLVEMENT IN MC4DN18</scope>
    <scope>VARIANTS MC4DN18 ARG-39 AND ARG-43</scope>
    <scope>CHARACTERIZATION OF VARIANTS MC4DN18 ARG-39 AND ARG-43</scope>
</reference>
<dbReference type="EMBL" id="M83308">
    <property type="protein sequence ID" value="AAA52062.1"/>
    <property type="molecule type" value="mRNA"/>
</dbReference>
<dbReference type="EMBL" id="U66875">
    <property type="protein sequence ID" value="AAC51328.1"/>
    <property type="molecule type" value="Genomic_DNA"/>
</dbReference>
<dbReference type="EMBL" id="BC029818">
    <property type="protein sequence ID" value="AAH29818.1"/>
    <property type="molecule type" value="mRNA"/>
</dbReference>
<dbReference type="CCDS" id="CCDS10712.1"/>
<dbReference type="PIR" id="JC1304">
    <property type="entry name" value="OGHU6A"/>
</dbReference>
<dbReference type="RefSeq" id="NP_005196.1">
    <property type="nucleotide sequence ID" value="NM_005205.4"/>
</dbReference>
<dbReference type="SMR" id="Q02221"/>
<dbReference type="BioGRID" id="107732">
    <property type="interactions" value="5"/>
</dbReference>
<dbReference type="FunCoup" id="Q02221">
    <property type="interactions" value="219"/>
</dbReference>
<dbReference type="IntAct" id="Q02221">
    <property type="interactions" value="10"/>
</dbReference>
<dbReference type="STRING" id="9606.ENSP00000287490"/>
<dbReference type="DrugBank" id="DB02659">
    <property type="generic name" value="Cholic Acid"/>
</dbReference>
<dbReference type="DrugBank" id="DB04464">
    <property type="generic name" value="N-Formylmethionine"/>
</dbReference>
<dbReference type="TCDB" id="3.D.4.11.1">
    <property type="family name" value="the proton-translocating cytochrome oxidase (cox) superfamily"/>
</dbReference>
<dbReference type="PhosphoSitePlus" id="Q02221"/>
<dbReference type="BioMuta" id="COX6A2"/>
<dbReference type="DMDM" id="116241323"/>
<dbReference type="MassIVE" id="Q02221"/>
<dbReference type="PaxDb" id="9606-ENSP00000287490"/>
<dbReference type="PeptideAtlas" id="Q02221"/>
<dbReference type="ProteomicsDB" id="58061"/>
<dbReference type="Antibodypedia" id="27872">
    <property type="antibodies" value="104 antibodies from 30 providers"/>
</dbReference>
<dbReference type="DNASU" id="1339"/>
<dbReference type="Ensembl" id="ENST00000287490.5">
    <property type="protein sequence ID" value="ENSP00000287490.4"/>
    <property type="gene ID" value="ENSG00000156885.6"/>
</dbReference>
<dbReference type="GeneID" id="1339"/>
<dbReference type="KEGG" id="hsa:1339"/>
<dbReference type="MANE-Select" id="ENST00000287490.5">
    <property type="protein sequence ID" value="ENSP00000287490.4"/>
    <property type="RefSeq nucleotide sequence ID" value="NM_005205.4"/>
    <property type="RefSeq protein sequence ID" value="NP_005196.1"/>
</dbReference>
<dbReference type="UCSC" id="uc002ebx.2">
    <property type="organism name" value="human"/>
</dbReference>
<dbReference type="AGR" id="HGNC:2279"/>
<dbReference type="CTD" id="1339"/>
<dbReference type="DisGeNET" id="1339"/>
<dbReference type="GeneCards" id="COX6A2"/>
<dbReference type="HGNC" id="HGNC:2279">
    <property type="gene designation" value="COX6A2"/>
</dbReference>
<dbReference type="HPA" id="ENSG00000156885">
    <property type="expression patterns" value="Group enriched (heart muscle, skeletal muscle, tongue)"/>
</dbReference>
<dbReference type="MalaCards" id="COX6A2"/>
<dbReference type="MIM" id="602009">
    <property type="type" value="gene"/>
</dbReference>
<dbReference type="MIM" id="619062">
    <property type="type" value="phenotype"/>
</dbReference>
<dbReference type="neXtProt" id="NX_Q02221"/>
<dbReference type="OpenTargets" id="ENSG00000156885"/>
<dbReference type="Orphanet" id="254905">
    <property type="disease" value="Isolated cytochrome C oxidase deficiency"/>
</dbReference>
<dbReference type="PharmGKB" id="PA26796"/>
<dbReference type="VEuPathDB" id="HostDB:ENSG00000156885"/>
<dbReference type="eggNOG" id="KOG3469">
    <property type="taxonomic scope" value="Eukaryota"/>
</dbReference>
<dbReference type="GeneTree" id="ENSGT00940000162257"/>
<dbReference type="HOGENOM" id="CLU_122515_1_1_1"/>
<dbReference type="InParanoid" id="Q02221"/>
<dbReference type="OMA" id="EPFAKYE"/>
<dbReference type="OrthoDB" id="5947505at2759"/>
<dbReference type="PAN-GO" id="Q02221">
    <property type="GO annotations" value="3 GO annotations based on evolutionary models"/>
</dbReference>
<dbReference type="PhylomeDB" id="Q02221"/>
<dbReference type="TreeFam" id="TF105064"/>
<dbReference type="PathwayCommons" id="Q02221"/>
<dbReference type="Reactome" id="R-HSA-5628897">
    <property type="pathway name" value="TP53 Regulates Metabolic Genes"/>
</dbReference>
<dbReference type="Reactome" id="R-HSA-611105">
    <property type="pathway name" value="Respiratory electron transport"/>
</dbReference>
<dbReference type="Reactome" id="R-HSA-9707564">
    <property type="pathway name" value="Cytoprotection by HMOX1"/>
</dbReference>
<dbReference type="Reactome" id="R-HSA-9864848">
    <property type="pathway name" value="Complex IV assembly"/>
</dbReference>
<dbReference type="SignaLink" id="Q02221"/>
<dbReference type="UniPathway" id="UPA00705"/>
<dbReference type="BioGRID-ORCS" id="1339">
    <property type="hits" value="13 hits in 1145 CRISPR screens"/>
</dbReference>
<dbReference type="ChiTaRS" id="COX6A2">
    <property type="organism name" value="human"/>
</dbReference>
<dbReference type="GenomeRNAi" id="1339"/>
<dbReference type="Pharos" id="Q02221">
    <property type="development level" value="Tbio"/>
</dbReference>
<dbReference type="PRO" id="PR:Q02221"/>
<dbReference type="Proteomes" id="UP000005640">
    <property type="component" value="Chromosome 16"/>
</dbReference>
<dbReference type="RNAct" id="Q02221">
    <property type="molecule type" value="protein"/>
</dbReference>
<dbReference type="Bgee" id="ENSG00000156885">
    <property type="expression patterns" value="Expressed in hindlimb stylopod muscle and 119 other cell types or tissues"/>
</dbReference>
<dbReference type="GO" id="GO:0005743">
    <property type="term" value="C:mitochondrial inner membrane"/>
    <property type="evidence" value="ECO:0000304"/>
    <property type="project" value="Reactome"/>
</dbReference>
<dbReference type="GO" id="GO:0005739">
    <property type="term" value="C:mitochondrion"/>
    <property type="evidence" value="ECO:0006056"/>
    <property type="project" value="FlyBase"/>
</dbReference>
<dbReference type="GO" id="GO:0045277">
    <property type="term" value="C:respiratory chain complex IV"/>
    <property type="evidence" value="ECO:0000318"/>
    <property type="project" value="GO_Central"/>
</dbReference>
<dbReference type="GO" id="GO:0030234">
    <property type="term" value="F:enzyme regulator activity"/>
    <property type="evidence" value="ECO:0000318"/>
    <property type="project" value="GO_Central"/>
</dbReference>
<dbReference type="GO" id="GO:0016491">
    <property type="term" value="F:oxidoreductase activity"/>
    <property type="evidence" value="ECO:0007669"/>
    <property type="project" value="UniProtKB-KW"/>
</dbReference>
<dbReference type="GO" id="GO:0006091">
    <property type="term" value="P:generation of precursor metabolites and energy"/>
    <property type="evidence" value="ECO:0000304"/>
    <property type="project" value="ProtInc"/>
</dbReference>
<dbReference type="GO" id="GO:0006123">
    <property type="term" value="P:mitochondrial electron transport, cytochrome c to oxygen"/>
    <property type="evidence" value="ECO:0000318"/>
    <property type="project" value="GO_Central"/>
</dbReference>
<dbReference type="CDD" id="cd00925">
    <property type="entry name" value="Cyt_c_Oxidase_VIa"/>
    <property type="match status" value="1"/>
</dbReference>
<dbReference type="FunFam" id="4.10.95.10:FF:000001">
    <property type="entry name" value="Cytochrome c oxidase subunit 6A, mitochondrial"/>
    <property type="match status" value="1"/>
</dbReference>
<dbReference type="Gene3D" id="4.10.95.10">
    <property type="entry name" value="Cytochrome c oxidase, subunit VIa"/>
    <property type="match status" value="1"/>
</dbReference>
<dbReference type="InterPro" id="IPR001349">
    <property type="entry name" value="Cyt_c_oxidase_su6a"/>
</dbReference>
<dbReference type="InterPro" id="IPR018507">
    <property type="entry name" value="Cyt_c_oxidase_su6a_CS"/>
</dbReference>
<dbReference type="InterPro" id="IPR036418">
    <property type="entry name" value="Cyt_c_oxidase_su6a_sf"/>
</dbReference>
<dbReference type="PANTHER" id="PTHR11504">
    <property type="entry name" value="CYTOCHROME C OXIDASE POLYPEPTIDE VIA"/>
    <property type="match status" value="1"/>
</dbReference>
<dbReference type="PANTHER" id="PTHR11504:SF1">
    <property type="entry name" value="CYTOCHROME C OXIDASE SUBUNIT 6A2, MITOCHONDRIAL"/>
    <property type="match status" value="1"/>
</dbReference>
<dbReference type="Pfam" id="PF02046">
    <property type="entry name" value="COX6A"/>
    <property type="match status" value="1"/>
</dbReference>
<dbReference type="PIRSF" id="PIRSF000277">
    <property type="entry name" value="COX6A1"/>
    <property type="match status" value="1"/>
</dbReference>
<dbReference type="SUPFAM" id="SSF81411">
    <property type="entry name" value="Mitochondrial cytochrome c oxidase subunit VIa"/>
    <property type="match status" value="1"/>
</dbReference>
<dbReference type="PROSITE" id="PS01329">
    <property type="entry name" value="COX6A"/>
    <property type="match status" value="1"/>
</dbReference>
<organism>
    <name type="scientific">Homo sapiens</name>
    <name type="common">Human</name>
    <dbReference type="NCBI Taxonomy" id="9606"/>
    <lineage>
        <taxon>Eukaryota</taxon>
        <taxon>Metazoa</taxon>
        <taxon>Chordata</taxon>
        <taxon>Craniata</taxon>
        <taxon>Vertebrata</taxon>
        <taxon>Euteleostomi</taxon>
        <taxon>Mammalia</taxon>
        <taxon>Eutheria</taxon>
        <taxon>Euarchontoglires</taxon>
        <taxon>Primates</taxon>
        <taxon>Haplorrhini</taxon>
        <taxon>Catarrhini</taxon>
        <taxon>Hominidae</taxon>
        <taxon>Homo</taxon>
    </lineage>
</organism>
<evidence type="ECO:0000250" key="1"/>
<evidence type="ECO:0000250" key="2">
    <source>
        <dbReference type="UniProtKB" id="P07471"/>
    </source>
</evidence>
<evidence type="ECO:0000250" key="3">
    <source>
        <dbReference type="UniProtKB" id="P32799"/>
    </source>
</evidence>
<evidence type="ECO:0000269" key="4">
    <source>
    </source>
</evidence>
<evidence type="ECO:0000269" key="5">
    <source>
    </source>
</evidence>
<evidence type="ECO:0000305" key="6"/>
<proteinExistence type="evidence at protein level"/>
<comment type="function">
    <text evidence="3 5">Component of the cytochrome c oxidase, the last enzyme in the mitochondrial electron transport chain which drives oxidative phosphorylation. The respiratory chain contains 3 multisubunit complexes succinate dehydrogenase (complex II, CII), ubiquinol-cytochrome c oxidoreductase (cytochrome b-c1 complex, complex III, CIII) and cytochrome c oxidase (complex IV, CIV), that cooperate to transfer electrons derived from NADH and succinate to molecular oxygen, creating an electrochemical gradient over the inner membrane that drives transmembrane transport and the ATP synthase. Cytochrome c oxidase is the component of the respiratory chain that catalyzes the reduction of oxygen to water. Electrons originating from reduced cytochrome c in the intermembrane space (IMS) are transferred via the dinuclear copper A center (CU(A)) of subunit 2 and heme A of subunit 1 to the active site in subunit 1, a binuclear center (BNC) formed by heme A3 and copper B (CU(B)). The BNC reduces molecular oxygen to 2 water molecules unsing 4 electrons from cytochrome c in the IMS and 4 protons from the mitochondrial matrix. Plays a role in the assembly and stabilization of complex IV (PubMed:31155743).</text>
</comment>
<comment type="pathway">
    <text evidence="3">Energy metabolism; oxidative phosphorylation.</text>
</comment>
<comment type="subunit">
    <text evidence="2">Component of the cytochrome c oxidase (complex IV, CIV), a multisubunit enzyme composed of 14 subunits. The complex is composed of a catalytic core of 3 subunits MT-CO1, MT-CO2 and MT-CO3, encoded in the mitochondrial DNA, and 11 supernumerary subunits COX4I1 (or COX4I2), COX5A, COX5B, COX6A1 (or COX6A2), COX6B1 (or COX6B2), COX6C, COX7A2 (or COX7A1), COX7B, COX7C, COX8A and NDUFA4, which are encoded in the nuclear genome (By similarity). The complex exists as a monomer or a dimer and forms supercomplexes (SCs) in the inner mitochondrial membrane with NADH-ubiquinone oxidoreductase (complex I, CI) and ubiquinol-cytochrome c oxidoreductase (cytochrome b-c1 complex, complex III, CIII), resulting in different assemblies (supercomplex SCI(1)III(2)IV(1) and megacomplex MCI(2)III(2)IV(2)) (By similarity).</text>
</comment>
<comment type="subcellular location">
    <subcellularLocation>
        <location evidence="2">Mitochondrion inner membrane</location>
        <topology evidence="2">Single-pass membrane protein</topology>
    </subcellularLocation>
</comment>
<comment type="tissue specificity">
    <text evidence="4 5">Expressed specifically in heart and muscle (PubMed:31155743). Not detected in brain, colon, spleen, kidney, liver, lung and pancreas (PubMed:31155743).</text>
</comment>
<comment type="disease" evidence="5">
    <disease id="DI-05939">
        <name>Mitochondrial complex IV deficiency, nuclear type 18</name>
        <acronym>MC4DN18</acronym>
        <description>An autosomal recessive, muscle-specific, mitochondrial disorder with onset in infancy. MC4DN18 is characterized by hypotonia, limb and facial muscle weakness, and high arched palate. Some patients have respiratory insufficiency at birth and cardiomyopathy. Patient skeletal muscle shows decreased levels and activity of mitochondrial respiratory complex IV.</description>
        <dbReference type="MIM" id="619062"/>
    </disease>
    <text>The disease is caused by variants affecting the gene represented in this entry.</text>
</comment>
<comment type="similarity">
    <text evidence="6">Belongs to the cytochrome c oxidase subunit 6A family.</text>
</comment>
<accession>Q02221</accession>
<accession>O00761</accession>
<accession>Q6GTW6</accession>
<keyword id="KW-0225">Disease variant</keyword>
<keyword id="KW-0472">Membrane</keyword>
<keyword id="KW-0496">Mitochondrion</keyword>
<keyword id="KW-0999">Mitochondrion inner membrane</keyword>
<keyword id="KW-0560">Oxidoreductase</keyword>
<keyword id="KW-1274">Primary mitochondrial disease</keyword>
<keyword id="KW-1267">Proteomics identification</keyword>
<keyword id="KW-1185">Reference proteome</keyword>
<keyword id="KW-0809">Transit peptide</keyword>
<keyword id="KW-0812">Transmembrane</keyword>
<keyword id="KW-1133">Transmembrane helix</keyword>
<gene>
    <name type="primary">COX6A2</name>
    <name type="synonym">COX6A</name>
    <name type="synonym">COX6AH</name>
</gene>
<name>CX6A2_HUMAN</name>